<name>GLMM_SALTO</name>
<reference key="1">
    <citation type="journal article" date="2007" name="Proc. Natl. Acad. Sci. U.S.A.">
        <title>Genome sequencing reveals complex secondary metabolome in the marine actinomycete Salinispora tropica.</title>
        <authorList>
            <person name="Udwary D.W."/>
            <person name="Zeigler L."/>
            <person name="Asolkar R.N."/>
            <person name="Singan V."/>
            <person name="Lapidus A."/>
            <person name="Fenical W."/>
            <person name="Jensen P.R."/>
            <person name="Moore B.S."/>
        </authorList>
    </citation>
    <scope>NUCLEOTIDE SEQUENCE [LARGE SCALE GENOMIC DNA]</scope>
    <source>
        <strain>ATCC BAA-916 / DSM 44818 / JCM 13857 / NBRC 105044 / CNB-440</strain>
    </source>
</reference>
<gene>
    <name evidence="1" type="primary">glmM</name>
    <name type="ordered locus">Strop_3862</name>
</gene>
<protein>
    <recommendedName>
        <fullName evidence="1">Phosphoglucosamine mutase</fullName>
        <ecNumber evidence="1">5.4.2.10</ecNumber>
    </recommendedName>
</protein>
<organism>
    <name type="scientific">Salinispora tropica (strain ATCC BAA-916 / DSM 44818 / JCM 13857 / NBRC 105044 / CNB-440)</name>
    <dbReference type="NCBI Taxonomy" id="369723"/>
    <lineage>
        <taxon>Bacteria</taxon>
        <taxon>Bacillati</taxon>
        <taxon>Actinomycetota</taxon>
        <taxon>Actinomycetes</taxon>
        <taxon>Micromonosporales</taxon>
        <taxon>Micromonosporaceae</taxon>
        <taxon>Salinispora</taxon>
    </lineage>
</organism>
<comment type="function">
    <text evidence="1">Catalyzes the conversion of glucosamine-6-phosphate to glucosamine-1-phosphate.</text>
</comment>
<comment type="catalytic activity">
    <reaction evidence="1">
        <text>alpha-D-glucosamine 1-phosphate = D-glucosamine 6-phosphate</text>
        <dbReference type="Rhea" id="RHEA:23424"/>
        <dbReference type="ChEBI" id="CHEBI:58516"/>
        <dbReference type="ChEBI" id="CHEBI:58725"/>
        <dbReference type="EC" id="5.4.2.10"/>
    </reaction>
</comment>
<comment type="cofactor">
    <cofactor evidence="1">
        <name>Mg(2+)</name>
        <dbReference type="ChEBI" id="CHEBI:18420"/>
    </cofactor>
    <text evidence="1">Binds 1 Mg(2+) ion per subunit.</text>
</comment>
<comment type="PTM">
    <text evidence="1">Activated by phosphorylation.</text>
</comment>
<comment type="similarity">
    <text evidence="1">Belongs to the phosphohexose mutase family.</text>
</comment>
<feature type="chain" id="PRO_0000343596" description="Phosphoglucosamine mutase">
    <location>
        <begin position="1"/>
        <end position="451"/>
    </location>
</feature>
<feature type="active site" description="Phosphoserine intermediate" evidence="1">
    <location>
        <position position="102"/>
    </location>
</feature>
<feature type="binding site" description="via phosphate group" evidence="1">
    <location>
        <position position="102"/>
    </location>
    <ligand>
        <name>Mg(2+)</name>
        <dbReference type="ChEBI" id="CHEBI:18420"/>
    </ligand>
</feature>
<feature type="binding site" evidence="1">
    <location>
        <position position="243"/>
    </location>
    <ligand>
        <name>Mg(2+)</name>
        <dbReference type="ChEBI" id="CHEBI:18420"/>
    </ligand>
</feature>
<feature type="binding site" evidence="1">
    <location>
        <position position="245"/>
    </location>
    <ligand>
        <name>Mg(2+)</name>
        <dbReference type="ChEBI" id="CHEBI:18420"/>
    </ligand>
</feature>
<feature type="binding site" evidence="1">
    <location>
        <position position="247"/>
    </location>
    <ligand>
        <name>Mg(2+)</name>
        <dbReference type="ChEBI" id="CHEBI:18420"/>
    </ligand>
</feature>
<feature type="modified residue" description="Phosphoserine" evidence="1">
    <location>
        <position position="102"/>
    </location>
</feature>
<dbReference type="EC" id="5.4.2.10" evidence="1"/>
<dbReference type="EMBL" id="CP000667">
    <property type="protein sequence ID" value="ABP56292.1"/>
    <property type="molecule type" value="Genomic_DNA"/>
</dbReference>
<dbReference type="RefSeq" id="WP_012015067.1">
    <property type="nucleotide sequence ID" value="NC_009380.1"/>
</dbReference>
<dbReference type="SMR" id="A4XBI5"/>
<dbReference type="STRING" id="369723.Strop_3862"/>
<dbReference type="KEGG" id="stp:Strop_3862"/>
<dbReference type="PATRIC" id="fig|369723.5.peg.3986"/>
<dbReference type="eggNOG" id="COG1109">
    <property type="taxonomic scope" value="Bacteria"/>
</dbReference>
<dbReference type="HOGENOM" id="CLU_016950_7_0_11"/>
<dbReference type="Proteomes" id="UP000000235">
    <property type="component" value="Chromosome"/>
</dbReference>
<dbReference type="GO" id="GO:0005829">
    <property type="term" value="C:cytosol"/>
    <property type="evidence" value="ECO:0007669"/>
    <property type="project" value="TreeGrafter"/>
</dbReference>
<dbReference type="GO" id="GO:0000287">
    <property type="term" value="F:magnesium ion binding"/>
    <property type="evidence" value="ECO:0007669"/>
    <property type="project" value="UniProtKB-UniRule"/>
</dbReference>
<dbReference type="GO" id="GO:0008966">
    <property type="term" value="F:phosphoglucosamine mutase activity"/>
    <property type="evidence" value="ECO:0007669"/>
    <property type="project" value="UniProtKB-UniRule"/>
</dbReference>
<dbReference type="GO" id="GO:0004615">
    <property type="term" value="F:phosphomannomutase activity"/>
    <property type="evidence" value="ECO:0007669"/>
    <property type="project" value="TreeGrafter"/>
</dbReference>
<dbReference type="GO" id="GO:0005975">
    <property type="term" value="P:carbohydrate metabolic process"/>
    <property type="evidence" value="ECO:0007669"/>
    <property type="project" value="InterPro"/>
</dbReference>
<dbReference type="GO" id="GO:0009252">
    <property type="term" value="P:peptidoglycan biosynthetic process"/>
    <property type="evidence" value="ECO:0007669"/>
    <property type="project" value="TreeGrafter"/>
</dbReference>
<dbReference type="GO" id="GO:0006048">
    <property type="term" value="P:UDP-N-acetylglucosamine biosynthetic process"/>
    <property type="evidence" value="ECO:0007669"/>
    <property type="project" value="TreeGrafter"/>
</dbReference>
<dbReference type="CDD" id="cd05802">
    <property type="entry name" value="GlmM"/>
    <property type="match status" value="1"/>
</dbReference>
<dbReference type="FunFam" id="3.30.310.50:FF:000001">
    <property type="entry name" value="Phosphoglucosamine mutase"/>
    <property type="match status" value="1"/>
</dbReference>
<dbReference type="FunFam" id="3.40.120.10:FF:000001">
    <property type="entry name" value="Phosphoglucosamine mutase"/>
    <property type="match status" value="1"/>
</dbReference>
<dbReference type="FunFam" id="3.40.120.10:FF:000002">
    <property type="entry name" value="Phosphoglucosamine mutase"/>
    <property type="match status" value="1"/>
</dbReference>
<dbReference type="Gene3D" id="3.40.120.10">
    <property type="entry name" value="Alpha-D-Glucose-1,6-Bisphosphate, subunit A, domain 3"/>
    <property type="match status" value="3"/>
</dbReference>
<dbReference type="Gene3D" id="3.30.310.50">
    <property type="entry name" value="Alpha-D-phosphohexomutase, C-terminal domain"/>
    <property type="match status" value="1"/>
</dbReference>
<dbReference type="HAMAP" id="MF_01554_B">
    <property type="entry name" value="GlmM_B"/>
    <property type="match status" value="1"/>
</dbReference>
<dbReference type="InterPro" id="IPR005844">
    <property type="entry name" value="A-D-PHexomutase_a/b/a-I"/>
</dbReference>
<dbReference type="InterPro" id="IPR016055">
    <property type="entry name" value="A-D-PHexomutase_a/b/a-I/II/III"/>
</dbReference>
<dbReference type="InterPro" id="IPR005845">
    <property type="entry name" value="A-D-PHexomutase_a/b/a-II"/>
</dbReference>
<dbReference type="InterPro" id="IPR005846">
    <property type="entry name" value="A-D-PHexomutase_a/b/a-III"/>
</dbReference>
<dbReference type="InterPro" id="IPR005843">
    <property type="entry name" value="A-D-PHexomutase_C"/>
</dbReference>
<dbReference type="InterPro" id="IPR036900">
    <property type="entry name" value="A-D-PHexomutase_C_sf"/>
</dbReference>
<dbReference type="InterPro" id="IPR016066">
    <property type="entry name" value="A-D-PHexomutase_CS"/>
</dbReference>
<dbReference type="InterPro" id="IPR005841">
    <property type="entry name" value="Alpha-D-phosphohexomutase_SF"/>
</dbReference>
<dbReference type="InterPro" id="IPR006352">
    <property type="entry name" value="GlmM_bact"/>
</dbReference>
<dbReference type="InterPro" id="IPR050060">
    <property type="entry name" value="Phosphoglucosamine_mutase"/>
</dbReference>
<dbReference type="NCBIfam" id="TIGR01455">
    <property type="entry name" value="glmM"/>
    <property type="match status" value="1"/>
</dbReference>
<dbReference type="PANTHER" id="PTHR42946:SF1">
    <property type="entry name" value="PHOSPHOGLUCOMUTASE (ALPHA-D-GLUCOSE-1,6-BISPHOSPHATE-DEPENDENT)"/>
    <property type="match status" value="1"/>
</dbReference>
<dbReference type="PANTHER" id="PTHR42946">
    <property type="entry name" value="PHOSPHOHEXOSE MUTASE"/>
    <property type="match status" value="1"/>
</dbReference>
<dbReference type="Pfam" id="PF02878">
    <property type="entry name" value="PGM_PMM_I"/>
    <property type="match status" value="1"/>
</dbReference>
<dbReference type="Pfam" id="PF02879">
    <property type="entry name" value="PGM_PMM_II"/>
    <property type="match status" value="1"/>
</dbReference>
<dbReference type="Pfam" id="PF02880">
    <property type="entry name" value="PGM_PMM_III"/>
    <property type="match status" value="1"/>
</dbReference>
<dbReference type="Pfam" id="PF00408">
    <property type="entry name" value="PGM_PMM_IV"/>
    <property type="match status" value="1"/>
</dbReference>
<dbReference type="PRINTS" id="PR00509">
    <property type="entry name" value="PGMPMM"/>
</dbReference>
<dbReference type="SUPFAM" id="SSF55957">
    <property type="entry name" value="Phosphoglucomutase, C-terminal domain"/>
    <property type="match status" value="1"/>
</dbReference>
<dbReference type="SUPFAM" id="SSF53738">
    <property type="entry name" value="Phosphoglucomutase, first 3 domains"/>
    <property type="match status" value="3"/>
</dbReference>
<dbReference type="PROSITE" id="PS00710">
    <property type="entry name" value="PGM_PMM"/>
    <property type="match status" value="1"/>
</dbReference>
<proteinExistence type="inferred from homology"/>
<keyword id="KW-0413">Isomerase</keyword>
<keyword id="KW-0460">Magnesium</keyword>
<keyword id="KW-0479">Metal-binding</keyword>
<keyword id="KW-0597">Phosphoprotein</keyword>
<keyword id="KW-1185">Reference proteome</keyword>
<evidence type="ECO:0000255" key="1">
    <source>
        <dbReference type="HAMAP-Rule" id="MF_01554"/>
    </source>
</evidence>
<sequence>MGRLFGTDGVRGRANADLTPELGLAVAVAAAHTLAEADRSHPPLAVVGRDTRASGEMLESAVVAGLTSAGANVVRVGVLPTPAVAFLTAEAKADIGVMLSASHNPMPDNGIKLFAAGGHKLPDEIEMKIEAAVEANTTTAWERPVGAGVGRVHDLLDGADHYVQHLVGTVPHRLDGIKVVVDCANGAAAEVAPAAYREAGAEVVAIHAEPNGLNINDECGSNHVAALRQAVVEHGAQLGIAHDGDADRCVAVTADGDEVDGDQVMAILALAMREAGTLTADTLVATVMSNLGLRIAMSREGIRLVETKVGDRYVLEELRASGLALGGEQSGHIVMPAHATTGDGVLTGLHLMSRMAGTGRPLAELAAVVSPLPQVLINVPVGDRTVGAAAPAVRAEVARAEAELGDAGRVLLRPSGTEPLVRVMVEAGTETTAREVAERIAEQVRTASPVS</sequence>
<accession>A4XBI5</accession>